<evidence type="ECO:0000255" key="1"/>
<evidence type="ECO:0000256" key="2">
    <source>
        <dbReference type="SAM" id="MobiDB-lite"/>
    </source>
</evidence>
<evidence type="ECO:0000269" key="3">
    <source>
    </source>
</evidence>
<evidence type="ECO:0000305" key="4"/>
<gene>
    <name type="ordered locus">MIMI_R429</name>
</gene>
<feature type="chain" id="PRO_0000309554" description="Putative transcription factor R429">
    <location>
        <begin position="1"/>
        <end position="431"/>
    </location>
</feature>
<feature type="zinc finger region" evidence="1">
    <location>
        <begin position="218"/>
        <end position="241"/>
    </location>
</feature>
<feature type="region of interest" description="Disordered" evidence="2">
    <location>
        <begin position="142"/>
        <end position="187"/>
    </location>
</feature>
<feature type="coiled-coil region" evidence="1">
    <location>
        <begin position="28"/>
        <end position="95"/>
    </location>
</feature>
<feature type="compositionally biased region" description="Low complexity" evidence="2">
    <location>
        <begin position="143"/>
        <end position="152"/>
    </location>
</feature>
<feature type="compositionally biased region" description="Polar residues" evidence="2">
    <location>
        <begin position="170"/>
        <end position="181"/>
    </location>
</feature>
<organismHost>
    <name type="scientific">Acanthamoeba polyphaga</name>
    <name type="common">Amoeba</name>
    <dbReference type="NCBI Taxonomy" id="5757"/>
</organismHost>
<sequence>MAKTRTKKNANKRVVKGTLDQKHTEKINKFENMSKALPKKKEKLKKHEAQLEELMSLNPNKFTHENIRRKSYLMDSIKNLKEEINSIENCSESLDYIVNTLPILVNYYDNGDIVDDDKEELISEAMADGKKNILSYFFKETSQQENSSESNNDIVKNGTGGSTSKRKKIQPSNRCSGSKTGKVTETKPRLSRAKLYDNYLNVTDPHYRKSVKKSQNVCSVPDCDGEKILNQNDGYMVCKKCGFSEPILLTTDKPNYKEPTQDSGTYAYKRINHLTEILSQLQAKESTDIPNKVYEAIKRELKKRKIDKNDLDIFRLRRILKKLNYRKFYEHVPHILQVINGKEPPNFSRADEMKIKALFKSIQKPFAIYCPKNRKNFLNYSYVLHKFCELLELDEYTNYFPLLKNNAKLLQHDKIWKNICDYQGWYFYKSL</sequence>
<proteinExistence type="inferred from homology"/>
<organism>
    <name type="scientific">Acanthamoeba polyphaga mimivirus</name>
    <name type="common">APMV</name>
    <dbReference type="NCBI Taxonomy" id="212035"/>
    <lineage>
        <taxon>Viruses</taxon>
        <taxon>Varidnaviria</taxon>
        <taxon>Bamfordvirae</taxon>
        <taxon>Nucleocytoviricota</taxon>
        <taxon>Megaviricetes</taxon>
        <taxon>Imitervirales</taxon>
        <taxon>Mimiviridae</taxon>
        <taxon>Megamimivirinae</taxon>
        <taxon>Mimivirus</taxon>
        <taxon>Mimivirus bradfordmassiliense</taxon>
    </lineage>
</organism>
<comment type="function">
    <text evidence="3">Putative transcription factor.</text>
</comment>
<comment type="similarity">
    <text evidence="4">Belongs to the nucleo-cytoplasmic large DNA viruses (NCLDVs) VLTF-3 family.</text>
</comment>
<accession>Q5UQM6</accession>
<reference key="1">
    <citation type="journal article" date="2004" name="Science">
        <title>The 1.2-megabase genome sequence of Mimivirus.</title>
        <authorList>
            <person name="Raoult D."/>
            <person name="Audic S."/>
            <person name="Robert C."/>
            <person name="Abergel C."/>
            <person name="Renesto P."/>
            <person name="Ogata H."/>
            <person name="La Scola B."/>
            <person name="Susan M."/>
            <person name="Claverie J.-M."/>
        </authorList>
    </citation>
    <scope>NUCLEOTIDE SEQUENCE [LARGE SCALE GENOMIC DNA]</scope>
    <source>
        <strain>Rowbotham-Bradford</strain>
    </source>
</reference>
<reference key="2">
    <citation type="journal article" date="2006" name="Virus Res.">
        <title>Evolutionary genomics of nucleo-cytoplasmic large DNA viruses.</title>
        <authorList>
            <person name="Iyer L.M."/>
            <person name="Balaji S."/>
            <person name="Koonin E.V."/>
            <person name="Aravind L."/>
        </authorList>
    </citation>
    <scope>FUNCTION</scope>
</reference>
<dbReference type="EMBL" id="AY653733">
    <property type="protein sequence ID" value="AAV50698.1"/>
    <property type="molecule type" value="Genomic_DNA"/>
</dbReference>
<dbReference type="SMR" id="Q5UQM6"/>
<dbReference type="KEGG" id="vg:9925050"/>
<dbReference type="OrthoDB" id="6107at10239"/>
<dbReference type="Proteomes" id="UP000001134">
    <property type="component" value="Genome"/>
</dbReference>
<dbReference type="GO" id="GO:0008270">
    <property type="term" value="F:zinc ion binding"/>
    <property type="evidence" value="ECO:0007669"/>
    <property type="project" value="UniProtKB-KW"/>
</dbReference>
<dbReference type="GO" id="GO:0046782">
    <property type="term" value="P:regulation of viral transcription"/>
    <property type="evidence" value="ECO:0007669"/>
    <property type="project" value="InterPro"/>
</dbReference>
<dbReference type="InterPro" id="IPR007031">
    <property type="entry name" value="Poxvirus_VLTF3"/>
</dbReference>
<dbReference type="InterPro" id="IPR014900">
    <property type="entry name" value="VLTF-3_Zn_ribbon"/>
</dbReference>
<dbReference type="Pfam" id="PF08792">
    <property type="entry name" value="A2L_zn_ribbon"/>
    <property type="match status" value="1"/>
</dbReference>
<dbReference type="Pfam" id="PF04947">
    <property type="entry name" value="Pox_VLTF3"/>
    <property type="match status" value="1"/>
</dbReference>
<keyword id="KW-0175">Coiled coil</keyword>
<keyword id="KW-0479">Metal-binding</keyword>
<keyword id="KW-1185">Reference proteome</keyword>
<keyword id="KW-0804">Transcription</keyword>
<keyword id="KW-0805">Transcription regulation</keyword>
<keyword id="KW-0862">Zinc</keyword>
<keyword id="KW-0863">Zinc-finger</keyword>
<name>YR429_MIMIV</name>
<protein>
    <recommendedName>
        <fullName>Putative transcription factor R429</fullName>
    </recommendedName>
</protein>